<dbReference type="EC" id="1.1.1.267" evidence="1"/>
<dbReference type="EMBL" id="CP001359">
    <property type="protein sequence ID" value="ACL67049.1"/>
    <property type="molecule type" value="Genomic_DNA"/>
</dbReference>
<dbReference type="RefSeq" id="WP_015934817.1">
    <property type="nucleotide sequence ID" value="NC_011891.1"/>
</dbReference>
<dbReference type="SMR" id="B8J6S7"/>
<dbReference type="KEGG" id="acp:A2cp1_3723"/>
<dbReference type="HOGENOM" id="CLU_035714_4_0_7"/>
<dbReference type="UniPathway" id="UPA00056">
    <property type="reaction ID" value="UER00092"/>
</dbReference>
<dbReference type="Proteomes" id="UP000007089">
    <property type="component" value="Chromosome"/>
</dbReference>
<dbReference type="GO" id="GO:0030604">
    <property type="term" value="F:1-deoxy-D-xylulose-5-phosphate reductoisomerase activity"/>
    <property type="evidence" value="ECO:0007669"/>
    <property type="project" value="UniProtKB-UniRule"/>
</dbReference>
<dbReference type="GO" id="GO:0030145">
    <property type="term" value="F:manganese ion binding"/>
    <property type="evidence" value="ECO:0007669"/>
    <property type="project" value="TreeGrafter"/>
</dbReference>
<dbReference type="GO" id="GO:0070402">
    <property type="term" value="F:NADPH binding"/>
    <property type="evidence" value="ECO:0007669"/>
    <property type="project" value="InterPro"/>
</dbReference>
<dbReference type="GO" id="GO:0051484">
    <property type="term" value="P:isopentenyl diphosphate biosynthetic process, methylerythritol 4-phosphate pathway involved in terpenoid biosynthetic process"/>
    <property type="evidence" value="ECO:0007669"/>
    <property type="project" value="TreeGrafter"/>
</dbReference>
<dbReference type="FunFam" id="3.40.50.720:FF:000045">
    <property type="entry name" value="1-deoxy-D-xylulose 5-phosphate reductoisomerase"/>
    <property type="match status" value="1"/>
</dbReference>
<dbReference type="Gene3D" id="1.10.1740.10">
    <property type="match status" value="1"/>
</dbReference>
<dbReference type="Gene3D" id="3.40.50.720">
    <property type="entry name" value="NAD(P)-binding Rossmann-like Domain"/>
    <property type="match status" value="1"/>
</dbReference>
<dbReference type="HAMAP" id="MF_00183">
    <property type="entry name" value="DXP_reductoisom"/>
    <property type="match status" value="1"/>
</dbReference>
<dbReference type="InterPro" id="IPR003821">
    <property type="entry name" value="DXP_reductoisomerase"/>
</dbReference>
<dbReference type="InterPro" id="IPR013644">
    <property type="entry name" value="DXP_reductoisomerase_C"/>
</dbReference>
<dbReference type="InterPro" id="IPR013512">
    <property type="entry name" value="DXP_reductoisomerase_N"/>
</dbReference>
<dbReference type="InterPro" id="IPR026877">
    <property type="entry name" value="DXPR_C"/>
</dbReference>
<dbReference type="InterPro" id="IPR036169">
    <property type="entry name" value="DXPR_C_sf"/>
</dbReference>
<dbReference type="InterPro" id="IPR036291">
    <property type="entry name" value="NAD(P)-bd_dom_sf"/>
</dbReference>
<dbReference type="NCBIfam" id="TIGR00243">
    <property type="entry name" value="Dxr"/>
    <property type="match status" value="1"/>
</dbReference>
<dbReference type="NCBIfam" id="NF009114">
    <property type="entry name" value="PRK12464.1"/>
    <property type="match status" value="1"/>
</dbReference>
<dbReference type="PANTHER" id="PTHR30525">
    <property type="entry name" value="1-DEOXY-D-XYLULOSE 5-PHOSPHATE REDUCTOISOMERASE"/>
    <property type="match status" value="1"/>
</dbReference>
<dbReference type="PANTHER" id="PTHR30525:SF0">
    <property type="entry name" value="1-DEOXY-D-XYLULOSE 5-PHOSPHATE REDUCTOISOMERASE, CHLOROPLASTIC"/>
    <property type="match status" value="1"/>
</dbReference>
<dbReference type="Pfam" id="PF08436">
    <property type="entry name" value="DXP_redisom_C"/>
    <property type="match status" value="1"/>
</dbReference>
<dbReference type="Pfam" id="PF02670">
    <property type="entry name" value="DXP_reductoisom"/>
    <property type="match status" value="1"/>
</dbReference>
<dbReference type="Pfam" id="PF13288">
    <property type="entry name" value="DXPR_C"/>
    <property type="match status" value="1"/>
</dbReference>
<dbReference type="PIRSF" id="PIRSF006205">
    <property type="entry name" value="Dxp_reductismrs"/>
    <property type="match status" value="1"/>
</dbReference>
<dbReference type="SUPFAM" id="SSF69055">
    <property type="entry name" value="1-deoxy-D-xylulose-5-phosphate reductoisomerase, C-terminal domain"/>
    <property type="match status" value="1"/>
</dbReference>
<dbReference type="SUPFAM" id="SSF55347">
    <property type="entry name" value="Glyceraldehyde-3-phosphate dehydrogenase-like, C-terminal domain"/>
    <property type="match status" value="1"/>
</dbReference>
<dbReference type="SUPFAM" id="SSF51735">
    <property type="entry name" value="NAD(P)-binding Rossmann-fold domains"/>
    <property type="match status" value="1"/>
</dbReference>
<proteinExistence type="inferred from homology"/>
<comment type="function">
    <text evidence="1">Catalyzes the NADPH-dependent rearrangement and reduction of 1-deoxy-D-xylulose-5-phosphate (DXP) to 2-C-methyl-D-erythritol 4-phosphate (MEP).</text>
</comment>
<comment type="catalytic activity">
    <reaction evidence="1">
        <text>2-C-methyl-D-erythritol 4-phosphate + NADP(+) = 1-deoxy-D-xylulose 5-phosphate + NADPH + H(+)</text>
        <dbReference type="Rhea" id="RHEA:13717"/>
        <dbReference type="ChEBI" id="CHEBI:15378"/>
        <dbReference type="ChEBI" id="CHEBI:57783"/>
        <dbReference type="ChEBI" id="CHEBI:57792"/>
        <dbReference type="ChEBI" id="CHEBI:58262"/>
        <dbReference type="ChEBI" id="CHEBI:58349"/>
        <dbReference type="EC" id="1.1.1.267"/>
    </reaction>
    <physiologicalReaction direction="right-to-left" evidence="1">
        <dbReference type="Rhea" id="RHEA:13719"/>
    </physiologicalReaction>
</comment>
<comment type="cofactor">
    <cofactor evidence="1">
        <name>Mg(2+)</name>
        <dbReference type="ChEBI" id="CHEBI:18420"/>
    </cofactor>
    <cofactor evidence="1">
        <name>Mn(2+)</name>
        <dbReference type="ChEBI" id="CHEBI:29035"/>
    </cofactor>
</comment>
<comment type="pathway">
    <text evidence="1">Isoprenoid biosynthesis; isopentenyl diphosphate biosynthesis via DXP pathway; isopentenyl diphosphate from 1-deoxy-D-xylulose 5-phosphate: step 1/6.</text>
</comment>
<comment type="similarity">
    <text evidence="1">Belongs to the DXR family.</text>
</comment>
<gene>
    <name evidence="1" type="primary">dxr</name>
    <name type="ordered locus">A2cp1_3723</name>
</gene>
<name>DXR_ANAD2</name>
<keyword id="KW-0414">Isoprene biosynthesis</keyword>
<keyword id="KW-0464">Manganese</keyword>
<keyword id="KW-0479">Metal-binding</keyword>
<keyword id="KW-0521">NADP</keyword>
<keyword id="KW-0560">Oxidoreductase</keyword>
<feature type="chain" id="PRO_1000189852" description="1-deoxy-D-xylulose 5-phosphate reductoisomerase">
    <location>
        <begin position="1"/>
        <end position="390"/>
    </location>
</feature>
<feature type="region of interest" description="Disordered" evidence="2">
    <location>
        <begin position="367"/>
        <end position="390"/>
    </location>
</feature>
<feature type="compositionally biased region" description="Basic and acidic residues" evidence="2">
    <location>
        <begin position="370"/>
        <end position="380"/>
    </location>
</feature>
<feature type="binding site" evidence="1">
    <location>
        <position position="10"/>
    </location>
    <ligand>
        <name>NADPH</name>
        <dbReference type="ChEBI" id="CHEBI:57783"/>
    </ligand>
</feature>
<feature type="binding site" evidence="1">
    <location>
        <position position="11"/>
    </location>
    <ligand>
        <name>NADPH</name>
        <dbReference type="ChEBI" id="CHEBI:57783"/>
    </ligand>
</feature>
<feature type="binding site" evidence="1">
    <location>
        <position position="12"/>
    </location>
    <ligand>
        <name>NADPH</name>
        <dbReference type="ChEBI" id="CHEBI:57783"/>
    </ligand>
</feature>
<feature type="binding site" evidence="1">
    <location>
        <position position="13"/>
    </location>
    <ligand>
        <name>NADPH</name>
        <dbReference type="ChEBI" id="CHEBI:57783"/>
    </ligand>
</feature>
<feature type="binding site" evidence="1">
    <location>
        <position position="36"/>
    </location>
    <ligand>
        <name>NADPH</name>
        <dbReference type="ChEBI" id="CHEBI:57783"/>
    </ligand>
</feature>
<feature type="binding site" evidence="1">
    <location>
        <position position="37"/>
    </location>
    <ligand>
        <name>NADPH</name>
        <dbReference type="ChEBI" id="CHEBI:57783"/>
    </ligand>
</feature>
<feature type="binding site" evidence="1">
    <location>
        <position position="38"/>
    </location>
    <ligand>
        <name>NADPH</name>
        <dbReference type="ChEBI" id="CHEBI:57783"/>
    </ligand>
</feature>
<feature type="binding site" evidence="1">
    <location>
        <position position="121"/>
    </location>
    <ligand>
        <name>NADPH</name>
        <dbReference type="ChEBI" id="CHEBI:57783"/>
    </ligand>
</feature>
<feature type="binding site" evidence="1">
    <location>
        <position position="122"/>
    </location>
    <ligand>
        <name>1-deoxy-D-xylulose 5-phosphate</name>
        <dbReference type="ChEBI" id="CHEBI:57792"/>
    </ligand>
</feature>
<feature type="binding site" evidence="1">
    <location>
        <position position="123"/>
    </location>
    <ligand>
        <name>NADPH</name>
        <dbReference type="ChEBI" id="CHEBI:57783"/>
    </ligand>
</feature>
<feature type="binding site" evidence="1">
    <location>
        <position position="147"/>
    </location>
    <ligand>
        <name>Mn(2+)</name>
        <dbReference type="ChEBI" id="CHEBI:29035"/>
    </ligand>
</feature>
<feature type="binding site" evidence="1">
    <location>
        <position position="148"/>
    </location>
    <ligand>
        <name>1-deoxy-D-xylulose 5-phosphate</name>
        <dbReference type="ChEBI" id="CHEBI:57792"/>
    </ligand>
</feature>
<feature type="binding site" evidence="1">
    <location>
        <position position="149"/>
    </location>
    <ligand>
        <name>1-deoxy-D-xylulose 5-phosphate</name>
        <dbReference type="ChEBI" id="CHEBI:57792"/>
    </ligand>
</feature>
<feature type="binding site" evidence="1">
    <location>
        <position position="149"/>
    </location>
    <ligand>
        <name>Mn(2+)</name>
        <dbReference type="ChEBI" id="CHEBI:29035"/>
    </ligand>
</feature>
<feature type="binding site" evidence="1">
    <location>
        <position position="173"/>
    </location>
    <ligand>
        <name>1-deoxy-D-xylulose 5-phosphate</name>
        <dbReference type="ChEBI" id="CHEBI:57792"/>
    </ligand>
</feature>
<feature type="binding site" evidence="1">
    <location>
        <position position="196"/>
    </location>
    <ligand>
        <name>1-deoxy-D-xylulose 5-phosphate</name>
        <dbReference type="ChEBI" id="CHEBI:57792"/>
    </ligand>
</feature>
<feature type="binding site" evidence="1">
    <location>
        <position position="202"/>
    </location>
    <ligand>
        <name>NADPH</name>
        <dbReference type="ChEBI" id="CHEBI:57783"/>
    </ligand>
</feature>
<feature type="binding site" evidence="1">
    <location>
        <position position="209"/>
    </location>
    <ligand>
        <name>1-deoxy-D-xylulose 5-phosphate</name>
        <dbReference type="ChEBI" id="CHEBI:57792"/>
    </ligand>
</feature>
<feature type="binding site" evidence="1">
    <location>
        <position position="214"/>
    </location>
    <ligand>
        <name>1-deoxy-D-xylulose 5-phosphate</name>
        <dbReference type="ChEBI" id="CHEBI:57792"/>
    </ligand>
</feature>
<feature type="binding site" evidence="1">
    <location>
        <position position="215"/>
    </location>
    <ligand>
        <name>1-deoxy-D-xylulose 5-phosphate</name>
        <dbReference type="ChEBI" id="CHEBI:57792"/>
    </ligand>
</feature>
<feature type="binding site" evidence="1">
    <location>
        <position position="218"/>
    </location>
    <ligand>
        <name>1-deoxy-D-xylulose 5-phosphate</name>
        <dbReference type="ChEBI" id="CHEBI:57792"/>
    </ligand>
</feature>
<feature type="binding site" evidence="1">
    <location>
        <position position="218"/>
    </location>
    <ligand>
        <name>Mn(2+)</name>
        <dbReference type="ChEBI" id="CHEBI:29035"/>
    </ligand>
</feature>
<reference key="1">
    <citation type="submission" date="2009-01" db="EMBL/GenBank/DDBJ databases">
        <title>Complete sequence of Anaeromyxobacter dehalogenans 2CP-1.</title>
        <authorList>
            <person name="Lucas S."/>
            <person name="Copeland A."/>
            <person name="Lapidus A."/>
            <person name="Glavina del Rio T."/>
            <person name="Dalin E."/>
            <person name="Tice H."/>
            <person name="Bruce D."/>
            <person name="Goodwin L."/>
            <person name="Pitluck S."/>
            <person name="Saunders E."/>
            <person name="Brettin T."/>
            <person name="Detter J.C."/>
            <person name="Han C."/>
            <person name="Larimer F."/>
            <person name="Land M."/>
            <person name="Hauser L."/>
            <person name="Kyrpides N."/>
            <person name="Ovchinnikova G."/>
            <person name="Beliaev A.S."/>
            <person name="Richardson P."/>
        </authorList>
    </citation>
    <scope>NUCLEOTIDE SEQUENCE [LARGE SCALE GENOMIC DNA]</scope>
    <source>
        <strain>2CP-1 / ATCC BAA-258</strain>
    </source>
</reference>
<sequence length="390" mass="41073">MKRVAILGSTGSIGVQALDVVGRFPDRFEVVGLAAGRNAPRLLEQIRRFRPRVVSVCDEAAARAVRAEAPPGTEVLSGDAGAVAVASHPDAAFVLAAISGGAGLRSTAAAIEAGKPVGLANKESMVLAGELLMARAAAKGVAILPVDSEHSAIHQSLVGHNRGEVRRLILTASGGPLRCTPEAELATVTPERALKHPNWSMGDKITIDSATLMNKGLEVIEARWLFGVEQQRIDIVVHPESVVHSMVEYVDGSIVAQLGISDMRGPISYAMGHPERMPLDLPPLDLGRLGKLTFEPPDPARFPAYTLAYRALELGGTAPAVLSGADEAAVAAFLARRCSFTEIAEVCADVLEAHVVEPVRSVEQALAASEHGRREAEKRVGARAHAPASR</sequence>
<organism>
    <name type="scientific">Anaeromyxobacter dehalogenans (strain 2CP-1 / ATCC BAA-258)</name>
    <dbReference type="NCBI Taxonomy" id="455488"/>
    <lineage>
        <taxon>Bacteria</taxon>
        <taxon>Pseudomonadati</taxon>
        <taxon>Myxococcota</taxon>
        <taxon>Myxococcia</taxon>
        <taxon>Myxococcales</taxon>
        <taxon>Cystobacterineae</taxon>
        <taxon>Anaeromyxobacteraceae</taxon>
        <taxon>Anaeromyxobacter</taxon>
    </lineage>
</organism>
<protein>
    <recommendedName>
        <fullName evidence="1">1-deoxy-D-xylulose 5-phosphate reductoisomerase</fullName>
        <shortName evidence="1">DXP reductoisomerase</shortName>
        <ecNumber evidence="1">1.1.1.267</ecNumber>
    </recommendedName>
    <alternativeName>
        <fullName evidence="1">1-deoxyxylulose-5-phosphate reductoisomerase</fullName>
    </alternativeName>
    <alternativeName>
        <fullName evidence="1">2-C-methyl-D-erythritol 4-phosphate synthase</fullName>
    </alternativeName>
</protein>
<accession>B8J6S7</accession>
<evidence type="ECO:0000255" key="1">
    <source>
        <dbReference type="HAMAP-Rule" id="MF_00183"/>
    </source>
</evidence>
<evidence type="ECO:0000256" key="2">
    <source>
        <dbReference type="SAM" id="MobiDB-lite"/>
    </source>
</evidence>